<sequence length="340" mass="37606">MRMVCLGLNHRTAPVEIRERFAVPSHKLREEGQRIRSLPGVDQCVVLSTCNRMEIYYWSNAPENAQEHILSHFLGDGRGELDMASYFYSHQGEDALGHLCRVLSGLDSMVLGETEIFGQVKTAYQTALDAGVTAACANKTFQKAFTIGKKVRTESQIHAGATSVGSVAVELAEQIFGDLSGTRVLILGAGEMSRVTGRALHARGAEGIYVANRSFDRAVELAGMIGGQAIRYDVWGNYLRDIDVVVAATAAPHCIITRETLLPLRASRKYRSLFLIDISVPRNISPDVADIDEVYLYDIDTLTQLADEAKRSRKQEVSRCEAIIRDSISRYFPDSALYDQ</sequence>
<dbReference type="EC" id="1.2.1.70" evidence="1"/>
<dbReference type="EMBL" id="CP001071">
    <property type="protein sequence ID" value="ACD03936.1"/>
    <property type="molecule type" value="Genomic_DNA"/>
</dbReference>
<dbReference type="SMR" id="B2ULP2"/>
<dbReference type="STRING" id="349741.Amuc_0091"/>
<dbReference type="PaxDb" id="349741-Amuc_0091"/>
<dbReference type="KEGG" id="amu:Amuc_0091"/>
<dbReference type="eggNOG" id="COG0373">
    <property type="taxonomic scope" value="Bacteria"/>
</dbReference>
<dbReference type="HOGENOM" id="CLU_035113_3_0_0"/>
<dbReference type="OrthoDB" id="110209at2"/>
<dbReference type="BioCyc" id="AMUC349741:G1GBX-112-MONOMER"/>
<dbReference type="UniPathway" id="UPA00251">
    <property type="reaction ID" value="UER00316"/>
</dbReference>
<dbReference type="Proteomes" id="UP000001031">
    <property type="component" value="Chromosome"/>
</dbReference>
<dbReference type="GO" id="GO:0008883">
    <property type="term" value="F:glutamyl-tRNA reductase activity"/>
    <property type="evidence" value="ECO:0007669"/>
    <property type="project" value="UniProtKB-UniRule"/>
</dbReference>
<dbReference type="GO" id="GO:0050661">
    <property type="term" value="F:NADP binding"/>
    <property type="evidence" value="ECO:0007669"/>
    <property type="project" value="InterPro"/>
</dbReference>
<dbReference type="GO" id="GO:0019353">
    <property type="term" value="P:protoporphyrinogen IX biosynthetic process from glutamate"/>
    <property type="evidence" value="ECO:0007669"/>
    <property type="project" value="TreeGrafter"/>
</dbReference>
<dbReference type="CDD" id="cd05213">
    <property type="entry name" value="NAD_bind_Glutamyl_tRNA_reduct"/>
    <property type="match status" value="1"/>
</dbReference>
<dbReference type="FunFam" id="3.30.460.30:FF:000001">
    <property type="entry name" value="Glutamyl-tRNA reductase"/>
    <property type="match status" value="1"/>
</dbReference>
<dbReference type="FunFam" id="3.40.50.720:FF:000031">
    <property type="entry name" value="Glutamyl-tRNA reductase"/>
    <property type="match status" value="1"/>
</dbReference>
<dbReference type="Gene3D" id="3.30.460.30">
    <property type="entry name" value="Glutamyl-tRNA reductase, N-terminal domain"/>
    <property type="match status" value="1"/>
</dbReference>
<dbReference type="Gene3D" id="3.40.50.720">
    <property type="entry name" value="NAD(P)-binding Rossmann-like Domain"/>
    <property type="match status" value="1"/>
</dbReference>
<dbReference type="HAMAP" id="MF_00087">
    <property type="entry name" value="Glu_tRNA_reductase"/>
    <property type="match status" value="1"/>
</dbReference>
<dbReference type="InterPro" id="IPR000343">
    <property type="entry name" value="4pyrrol_synth_GluRdtase"/>
</dbReference>
<dbReference type="InterPro" id="IPR015895">
    <property type="entry name" value="4pyrrol_synth_GluRdtase_N"/>
</dbReference>
<dbReference type="InterPro" id="IPR036343">
    <property type="entry name" value="GluRdtase_N_sf"/>
</dbReference>
<dbReference type="InterPro" id="IPR036291">
    <property type="entry name" value="NAD(P)-bd_dom_sf"/>
</dbReference>
<dbReference type="InterPro" id="IPR006151">
    <property type="entry name" value="Shikm_DH/Glu-tRNA_Rdtase"/>
</dbReference>
<dbReference type="NCBIfam" id="TIGR01035">
    <property type="entry name" value="hemA"/>
    <property type="match status" value="1"/>
</dbReference>
<dbReference type="PANTHER" id="PTHR43013">
    <property type="entry name" value="GLUTAMYL-TRNA REDUCTASE"/>
    <property type="match status" value="1"/>
</dbReference>
<dbReference type="PANTHER" id="PTHR43013:SF1">
    <property type="entry name" value="GLUTAMYL-TRNA REDUCTASE"/>
    <property type="match status" value="1"/>
</dbReference>
<dbReference type="Pfam" id="PF05201">
    <property type="entry name" value="GlutR_N"/>
    <property type="match status" value="1"/>
</dbReference>
<dbReference type="Pfam" id="PF01488">
    <property type="entry name" value="Shikimate_DH"/>
    <property type="match status" value="1"/>
</dbReference>
<dbReference type="SUPFAM" id="SSF69742">
    <property type="entry name" value="Glutamyl tRNA-reductase catalytic, N-terminal domain"/>
    <property type="match status" value="1"/>
</dbReference>
<dbReference type="SUPFAM" id="SSF51735">
    <property type="entry name" value="NAD(P)-binding Rossmann-fold domains"/>
    <property type="match status" value="1"/>
</dbReference>
<evidence type="ECO:0000255" key="1">
    <source>
        <dbReference type="HAMAP-Rule" id="MF_00087"/>
    </source>
</evidence>
<gene>
    <name evidence="1" type="primary">hemA</name>
    <name type="ordered locus">Amuc_0091</name>
</gene>
<name>HEM1_AKKM8</name>
<comment type="function">
    <text evidence="1">Catalyzes the NADPH-dependent reduction of glutamyl-tRNA(Glu) to glutamate 1-semialdehyde (GSA).</text>
</comment>
<comment type="catalytic activity">
    <reaction evidence="1">
        <text>(S)-4-amino-5-oxopentanoate + tRNA(Glu) + NADP(+) = L-glutamyl-tRNA(Glu) + NADPH + H(+)</text>
        <dbReference type="Rhea" id="RHEA:12344"/>
        <dbReference type="Rhea" id="RHEA-COMP:9663"/>
        <dbReference type="Rhea" id="RHEA-COMP:9680"/>
        <dbReference type="ChEBI" id="CHEBI:15378"/>
        <dbReference type="ChEBI" id="CHEBI:57501"/>
        <dbReference type="ChEBI" id="CHEBI:57783"/>
        <dbReference type="ChEBI" id="CHEBI:58349"/>
        <dbReference type="ChEBI" id="CHEBI:78442"/>
        <dbReference type="ChEBI" id="CHEBI:78520"/>
        <dbReference type="EC" id="1.2.1.70"/>
    </reaction>
</comment>
<comment type="pathway">
    <text evidence="1">Porphyrin-containing compound metabolism; protoporphyrin-IX biosynthesis; 5-aminolevulinate from L-glutamyl-tRNA(Glu): step 1/2.</text>
</comment>
<comment type="subunit">
    <text evidence="1">Homodimer.</text>
</comment>
<comment type="domain">
    <text evidence="1">Possesses an unusual extended V-shaped dimeric structure with each monomer consisting of three distinct domains arranged along a curved 'spinal' alpha-helix. The N-terminal catalytic domain specifically recognizes the glutamate moiety of the substrate. The second domain is the NADPH-binding domain, and the third C-terminal domain is responsible for dimerization.</text>
</comment>
<comment type="miscellaneous">
    <text evidence="1">During catalysis, the active site Cys acts as a nucleophile attacking the alpha-carbonyl group of tRNA-bound glutamate with the formation of a thioester intermediate between enzyme and glutamate, and the concomitant release of tRNA(Glu). The thioester intermediate is finally reduced by direct hydride transfer from NADPH, to form the product GSA.</text>
</comment>
<comment type="similarity">
    <text evidence="1">Belongs to the glutamyl-tRNA reductase family.</text>
</comment>
<reference key="1">
    <citation type="journal article" date="2011" name="PLoS ONE">
        <title>The genome of Akkermansia muciniphila, a dedicated intestinal mucin degrader, and its use in exploring intestinal metagenomes.</title>
        <authorList>
            <person name="van Passel M.W."/>
            <person name="Kant R."/>
            <person name="Zoetendal E.G."/>
            <person name="Plugge C.M."/>
            <person name="Derrien M."/>
            <person name="Malfatti S.A."/>
            <person name="Chain P.S."/>
            <person name="Woyke T."/>
            <person name="Palva A."/>
            <person name="de Vos W.M."/>
            <person name="Smidt H."/>
        </authorList>
    </citation>
    <scope>NUCLEOTIDE SEQUENCE [LARGE SCALE GENOMIC DNA]</scope>
    <source>
        <strain>ATCC BAA-835 / DSM 22959 / JCM 33894 / BCRC 81048 / CCUG 64013 / CIP 107961 / Muc</strain>
    </source>
</reference>
<organism>
    <name type="scientific">Akkermansia muciniphila (strain ATCC BAA-835 / DSM 22959 / JCM 33894 / BCRC 81048 / CCUG 64013 / CIP 107961 / Muc)</name>
    <dbReference type="NCBI Taxonomy" id="349741"/>
    <lineage>
        <taxon>Bacteria</taxon>
        <taxon>Pseudomonadati</taxon>
        <taxon>Verrucomicrobiota</taxon>
        <taxon>Verrucomicrobiia</taxon>
        <taxon>Verrucomicrobiales</taxon>
        <taxon>Akkermansiaceae</taxon>
        <taxon>Akkermansia</taxon>
    </lineage>
</organism>
<proteinExistence type="inferred from homology"/>
<feature type="chain" id="PRO_1000093112" description="Glutamyl-tRNA reductase">
    <location>
        <begin position="1"/>
        <end position="340"/>
    </location>
</feature>
<feature type="active site" description="Nucleophile" evidence="1">
    <location>
        <position position="50"/>
    </location>
</feature>
<feature type="binding site" evidence="1">
    <location>
        <begin position="49"/>
        <end position="52"/>
    </location>
    <ligand>
        <name>substrate</name>
    </ligand>
</feature>
<feature type="binding site" evidence="1">
    <location>
        <position position="108"/>
    </location>
    <ligand>
        <name>substrate</name>
    </ligand>
</feature>
<feature type="binding site" evidence="1">
    <location>
        <begin position="113"/>
        <end position="115"/>
    </location>
    <ligand>
        <name>substrate</name>
    </ligand>
</feature>
<feature type="binding site" evidence="1">
    <location>
        <position position="119"/>
    </location>
    <ligand>
        <name>substrate</name>
    </ligand>
</feature>
<feature type="binding site" evidence="1">
    <location>
        <begin position="188"/>
        <end position="193"/>
    </location>
    <ligand>
        <name>NADP(+)</name>
        <dbReference type="ChEBI" id="CHEBI:58349"/>
    </ligand>
</feature>
<feature type="site" description="Important for activity" evidence="1">
    <location>
        <position position="98"/>
    </location>
</feature>
<keyword id="KW-0521">NADP</keyword>
<keyword id="KW-0560">Oxidoreductase</keyword>
<keyword id="KW-0627">Porphyrin biosynthesis</keyword>
<keyword id="KW-1185">Reference proteome</keyword>
<accession>B2ULP2</accession>
<protein>
    <recommendedName>
        <fullName evidence="1">Glutamyl-tRNA reductase</fullName>
        <shortName evidence="1">GluTR</shortName>
        <ecNumber evidence="1">1.2.1.70</ecNumber>
    </recommendedName>
</protein>